<evidence type="ECO:0000250" key="1"/>
<evidence type="ECO:0000255" key="2">
    <source>
        <dbReference type="PROSITE-ProRule" id="PRU00345"/>
    </source>
</evidence>
<evidence type="ECO:0000305" key="3"/>
<feature type="chain" id="PRO_0000284458" description="HTH-type transcriptional regulator SarZ">
    <location>
        <begin position="1"/>
        <end position="148"/>
    </location>
</feature>
<feature type="domain" description="HTH marR-type" evidence="2">
    <location>
        <begin position="9"/>
        <end position="139"/>
    </location>
</feature>
<feature type="DNA-binding region" description="H-T-H motif" evidence="2">
    <location>
        <begin position="55"/>
        <end position="78"/>
    </location>
</feature>
<keyword id="KW-0010">Activator</keyword>
<keyword id="KW-0963">Cytoplasm</keyword>
<keyword id="KW-0238">DNA-binding</keyword>
<keyword id="KW-0804">Transcription</keyword>
<keyword id="KW-0805">Transcription regulation</keyword>
<keyword id="KW-0843">Virulence</keyword>
<protein>
    <recommendedName>
        <fullName>HTH-type transcriptional regulator SarZ</fullName>
    </recommendedName>
    <alternativeName>
        <fullName>Staphylococcal accessory regulator Z</fullName>
    </alternativeName>
</protein>
<sequence length="148" mass="17463">MYVENSYLSKQLCFLFYVSSKEIIKKYTNYLKEYDLTYTGYIVLMAIENDEKLNIKKLGERVFLDSGTLTPLLKKLEKKDYVVRTREEKDERNLQISLTEQGKAIKSPLAEISVKVFNEFNISEREASDIINNLRNFVSKNFDYSDRK</sequence>
<accession>Q99RP3</accession>
<dbReference type="EMBL" id="BA000017">
    <property type="protein sequence ID" value="BAB58548.1"/>
    <property type="molecule type" value="Genomic_DNA"/>
</dbReference>
<dbReference type="RefSeq" id="WP_000289215.1">
    <property type="nucleotide sequence ID" value="NC_002758.2"/>
</dbReference>
<dbReference type="SMR" id="Q99RP3"/>
<dbReference type="KEGG" id="sav:SAV2386"/>
<dbReference type="HOGENOM" id="CLU_083287_3_2_9"/>
<dbReference type="PhylomeDB" id="Q99RP3"/>
<dbReference type="Proteomes" id="UP000002481">
    <property type="component" value="Chromosome"/>
</dbReference>
<dbReference type="GO" id="GO:0005737">
    <property type="term" value="C:cytoplasm"/>
    <property type="evidence" value="ECO:0007669"/>
    <property type="project" value="UniProtKB-SubCell"/>
</dbReference>
<dbReference type="GO" id="GO:0003677">
    <property type="term" value="F:DNA binding"/>
    <property type="evidence" value="ECO:0007669"/>
    <property type="project" value="UniProtKB-KW"/>
</dbReference>
<dbReference type="GO" id="GO:0003700">
    <property type="term" value="F:DNA-binding transcription factor activity"/>
    <property type="evidence" value="ECO:0007669"/>
    <property type="project" value="InterPro"/>
</dbReference>
<dbReference type="FunFam" id="1.10.10.10:FF:000163">
    <property type="entry name" value="MarR family transcriptional regulator"/>
    <property type="match status" value="1"/>
</dbReference>
<dbReference type="Gene3D" id="1.10.10.10">
    <property type="entry name" value="Winged helix-like DNA-binding domain superfamily/Winged helix DNA-binding domain"/>
    <property type="match status" value="1"/>
</dbReference>
<dbReference type="InterPro" id="IPR000835">
    <property type="entry name" value="HTH_MarR-typ"/>
</dbReference>
<dbReference type="InterPro" id="IPR055166">
    <property type="entry name" value="Transc_reg_Sar_Rot_HTH"/>
</dbReference>
<dbReference type="InterPro" id="IPR036388">
    <property type="entry name" value="WH-like_DNA-bd_sf"/>
</dbReference>
<dbReference type="InterPro" id="IPR036390">
    <property type="entry name" value="WH_DNA-bd_sf"/>
</dbReference>
<dbReference type="PANTHER" id="PTHR42756">
    <property type="entry name" value="TRANSCRIPTIONAL REGULATOR, MARR"/>
    <property type="match status" value="1"/>
</dbReference>
<dbReference type="PANTHER" id="PTHR42756:SF1">
    <property type="entry name" value="TRANSCRIPTIONAL REPRESSOR OF EMRAB OPERON"/>
    <property type="match status" value="1"/>
</dbReference>
<dbReference type="Pfam" id="PF22381">
    <property type="entry name" value="Staph_reg_Sar_Rot"/>
    <property type="match status" value="1"/>
</dbReference>
<dbReference type="PRINTS" id="PR00598">
    <property type="entry name" value="HTHMARR"/>
</dbReference>
<dbReference type="SMART" id="SM00347">
    <property type="entry name" value="HTH_MARR"/>
    <property type="match status" value="1"/>
</dbReference>
<dbReference type="SUPFAM" id="SSF46785">
    <property type="entry name" value="Winged helix' DNA-binding domain"/>
    <property type="match status" value="1"/>
</dbReference>
<dbReference type="PROSITE" id="PS50995">
    <property type="entry name" value="HTH_MARR_2"/>
    <property type="match status" value="1"/>
</dbReference>
<gene>
    <name type="primary">sarZ</name>
    <name type="ordered locus">SAV2386</name>
</gene>
<organism>
    <name type="scientific">Staphylococcus aureus (strain Mu50 / ATCC 700699)</name>
    <dbReference type="NCBI Taxonomy" id="158878"/>
    <lineage>
        <taxon>Bacteria</taxon>
        <taxon>Bacillati</taxon>
        <taxon>Bacillota</taxon>
        <taxon>Bacilli</taxon>
        <taxon>Bacillales</taxon>
        <taxon>Staphylococcaceae</taxon>
        <taxon>Staphylococcus</taxon>
    </lineage>
</organism>
<name>SARZ_STAAM</name>
<reference key="1">
    <citation type="journal article" date="2001" name="Lancet">
        <title>Whole genome sequencing of meticillin-resistant Staphylococcus aureus.</title>
        <authorList>
            <person name="Kuroda M."/>
            <person name="Ohta T."/>
            <person name="Uchiyama I."/>
            <person name="Baba T."/>
            <person name="Yuzawa H."/>
            <person name="Kobayashi I."/>
            <person name="Cui L."/>
            <person name="Oguchi A."/>
            <person name="Aoki K."/>
            <person name="Nagai Y."/>
            <person name="Lian J.-Q."/>
            <person name="Ito T."/>
            <person name="Kanamori M."/>
            <person name="Matsumaru H."/>
            <person name="Maruyama A."/>
            <person name="Murakami H."/>
            <person name="Hosoyama A."/>
            <person name="Mizutani-Ui Y."/>
            <person name="Takahashi N.K."/>
            <person name="Sawano T."/>
            <person name="Inoue R."/>
            <person name="Kaito C."/>
            <person name="Sekimizu K."/>
            <person name="Hirakawa H."/>
            <person name="Kuhara S."/>
            <person name="Goto S."/>
            <person name="Yabuzaki J."/>
            <person name="Kanehisa M."/>
            <person name="Yamashita A."/>
            <person name="Oshima K."/>
            <person name="Furuya K."/>
            <person name="Yoshino C."/>
            <person name="Shiba T."/>
            <person name="Hattori M."/>
            <person name="Ogasawara N."/>
            <person name="Hayashi H."/>
            <person name="Hiramatsu K."/>
        </authorList>
    </citation>
    <scope>NUCLEOTIDE SEQUENCE [LARGE SCALE GENOMIC DNA]</scope>
    <source>
        <strain>Mu50 / ATCC 700699</strain>
    </source>
</reference>
<comment type="function">
    <text evidence="1">Activates transcription of virulence factors alpha- and beta hemolysin genes (hla and hlb). Also, activates RNAIII expression, a central regulator transcribed from the agr locus (By similarity).</text>
</comment>
<comment type="subcellular location">
    <subcellularLocation>
        <location evidence="1">Cytoplasm</location>
    </subcellularLocation>
</comment>
<comment type="induction">
    <text evidence="1">Transcriptionally activated by CvfA.</text>
</comment>
<comment type="similarity">
    <text evidence="3">Belongs to the SarZ family.</text>
</comment>
<proteinExistence type="inferred from homology"/>